<dbReference type="EC" id="6.1.1.20" evidence="1"/>
<dbReference type="EMBL" id="BX548174">
    <property type="protein sequence ID" value="CAE19330.1"/>
    <property type="molecule type" value="Genomic_DNA"/>
</dbReference>
<dbReference type="RefSeq" id="WP_011132504.1">
    <property type="nucleotide sequence ID" value="NC_005072.1"/>
</dbReference>
<dbReference type="SMR" id="Q7V1J8"/>
<dbReference type="STRING" id="59919.PMM0871"/>
<dbReference type="KEGG" id="pmm:PMM0871"/>
<dbReference type="eggNOG" id="COG0072">
    <property type="taxonomic scope" value="Bacteria"/>
</dbReference>
<dbReference type="HOGENOM" id="CLU_016891_0_0_3"/>
<dbReference type="OrthoDB" id="9805455at2"/>
<dbReference type="Proteomes" id="UP000001026">
    <property type="component" value="Chromosome"/>
</dbReference>
<dbReference type="GO" id="GO:0009328">
    <property type="term" value="C:phenylalanine-tRNA ligase complex"/>
    <property type="evidence" value="ECO:0007669"/>
    <property type="project" value="TreeGrafter"/>
</dbReference>
<dbReference type="GO" id="GO:0005524">
    <property type="term" value="F:ATP binding"/>
    <property type="evidence" value="ECO:0007669"/>
    <property type="project" value="UniProtKB-UniRule"/>
</dbReference>
<dbReference type="GO" id="GO:0000287">
    <property type="term" value="F:magnesium ion binding"/>
    <property type="evidence" value="ECO:0007669"/>
    <property type="project" value="UniProtKB-UniRule"/>
</dbReference>
<dbReference type="GO" id="GO:0004826">
    <property type="term" value="F:phenylalanine-tRNA ligase activity"/>
    <property type="evidence" value="ECO:0007669"/>
    <property type="project" value="UniProtKB-UniRule"/>
</dbReference>
<dbReference type="GO" id="GO:0000049">
    <property type="term" value="F:tRNA binding"/>
    <property type="evidence" value="ECO:0007669"/>
    <property type="project" value="UniProtKB-KW"/>
</dbReference>
<dbReference type="GO" id="GO:0006432">
    <property type="term" value="P:phenylalanyl-tRNA aminoacylation"/>
    <property type="evidence" value="ECO:0007669"/>
    <property type="project" value="UniProtKB-UniRule"/>
</dbReference>
<dbReference type="CDD" id="cd00769">
    <property type="entry name" value="PheRS_beta_core"/>
    <property type="match status" value="1"/>
</dbReference>
<dbReference type="CDD" id="cd02796">
    <property type="entry name" value="tRNA_bind_bactPheRS"/>
    <property type="match status" value="1"/>
</dbReference>
<dbReference type="FunFam" id="2.40.50.140:FF:000045">
    <property type="entry name" value="Phenylalanine--tRNA ligase beta subunit"/>
    <property type="match status" value="1"/>
</dbReference>
<dbReference type="Gene3D" id="3.30.56.10">
    <property type="match status" value="2"/>
</dbReference>
<dbReference type="Gene3D" id="3.30.930.10">
    <property type="entry name" value="Bira Bifunctional Protein, Domain 2"/>
    <property type="match status" value="1"/>
</dbReference>
<dbReference type="Gene3D" id="3.30.70.380">
    <property type="entry name" value="Ferrodoxin-fold anticodon-binding domain"/>
    <property type="match status" value="1"/>
</dbReference>
<dbReference type="Gene3D" id="2.40.50.140">
    <property type="entry name" value="Nucleic acid-binding proteins"/>
    <property type="match status" value="1"/>
</dbReference>
<dbReference type="Gene3D" id="3.50.40.10">
    <property type="entry name" value="Phenylalanyl-trna Synthetase, Chain B, domain 3"/>
    <property type="match status" value="1"/>
</dbReference>
<dbReference type="HAMAP" id="MF_00283">
    <property type="entry name" value="Phe_tRNA_synth_beta1"/>
    <property type="match status" value="1"/>
</dbReference>
<dbReference type="InterPro" id="IPR045864">
    <property type="entry name" value="aa-tRNA-synth_II/BPL/LPL"/>
</dbReference>
<dbReference type="InterPro" id="IPR005146">
    <property type="entry name" value="B3/B4_tRNA-bd"/>
</dbReference>
<dbReference type="InterPro" id="IPR009061">
    <property type="entry name" value="DNA-bd_dom_put_sf"/>
</dbReference>
<dbReference type="InterPro" id="IPR005121">
    <property type="entry name" value="Fdx_antiC-bd"/>
</dbReference>
<dbReference type="InterPro" id="IPR036690">
    <property type="entry name" value="Fdx_antiC-bd_sf"/>
</dbReference>
<dbReference type="InterPro" id="IPR012340">
    <property type="entry name" value="NA-bd_OB-fold"/>
</dbReference>
<dbReference type="InterPro" id="IPR045060">
    <property type="entry name" value="Phe-tRNA-ligase_IIc_bsu"/>
</dbReference>
<dbReference type="InterPro" id="IPR004532">
    <property type="entry name" value="Phe-tRNA-ligase_IIc_bsu_bact"/>
</dbReference>
<dbReference type="InterPro" id="IPR020825">
    <property type="entry name" value="Phe-tRNA_synthase-like_B3/B4"/>
</dbReference>
<dbReference type="InterPro" id="IPR041616">
    <property type="entry name" value="PheRS_beta_core"/>
</dbReference>
<dbReference type="InterPro" id="IPR002547">
    <property type="entry name" value="tRNA-bd_dom"/>
</dbReference>
<dbReference type="InterPro" id="IPR033714">
    <property type="entry name" value="tRNA_bind_bactPheRS"/>
</dbReference>
<dbReference type="InterPro" id="IPR005147">
    <property type="entry name" value="tRNA_synthase_B5-dom"/>
</dbReference>
<dbReference type="NCBIfam" id="TIGR00472">
    <property type="entry name" value="pheT_bact"/>
    <property type="match status" value="1"/>
</dbReference>
<dbReference type="NCBIfam" id="NF045760">
    <property type="entry name" value="YtpR"/>
    <property type="match status" value="1"/>
</dbReference>
<dbReference type="PANTHER" id="PTHR10947:SF0">
    <property type="entry name" value="PHENYLALANINE--TRNA LIGASE BETA SUBUNIT"/>
    <property type="match status" value="1"/>
</dbReference>
<dbReference type="PANTHER" id="PTHR10947">
    <property type="entry name" value="PHENYLALANYL-TRNA SYNTHETASE BETA CHAIN AND LEUCINE-RICH REPEAT-CONTAINING PROTEIN 47"/>
    <property type="match status" value="1"/>
</dbReference>
<dbReference type="Pfam" id="PF03483">
    <property type="entry name" value="B3_4"/>
    <property type="match status" value="1"/>
</dbReference>
<dbReference type="Pfam" id="PF03484">
    <property type="entry name" value="B5"/>
    <property type="match status" value="1"/>
</dbReference>
<dbReference type="Pfam" id="PF03147">
    <property type="entry name" value="FDX-ACB"/>
    <property type="match status" value="1"/>
</dbReference>
<dbReference type="Pfam" id="PF01588">
    <property type="entry name" value="tRNA_bind"/>
    <property type="match status" value="1"/>
</dbReference>
<dbReference type="Pfam" id="PF17759">
    <property type="entry name" value="tRNA_synthFbeta"/>
    <property type="match status" value="1"/>
</dbReference>
<dbReference type="SMART" id="SM00873">
    <property type="entry name" value="B3_4"/>
    <property type="match status" value="1"/>
</dbReference>
<dbReference type="SMART" id="SM00874">
    <property type="entry name" value="B5"/>
    <property type="match status" value="1"/>
</dbReference>
<dbReference type="SMART" id="SM00896">
    <property type="entry name" value="FDX-ACB"/>
    <property type="match status" value="1"/>
</dbReference>
<dbReference type="SUPFAM" id="SSF54991">
    <property type="entry name" value="Anticodon-binding domain of PheRS"/>
    <property type="match status" value="1"/>
</dbReference>
<dbReference type="SUPFAM" id="SSF55681">
    <property type="entry name" value="Class II aaRS and biotin synthetases"/>
    <property type="match status" value="1"/>
</dbReference>
<dbReference type="SUPFAM" id="SSF50249">
    <property type="entry name" value="Nucleic acid-binding proteins"/>
    <property type="match status" value="1"/>
</dbReference>
<dbReference type="SUPFAM" id="SSF56037">
    <property type="entry name" value="PheT/TilS domain"/>
    <property type="match status" value="1"/>
</dbReference>
<dbReference type="SUPFAM" id="SSF46955">
    <property type="entry name" value="Putative DNA-binding domain"/>
    <property type="match status" value="1"/>
</dbReference>
<dbReference type="PROSITE" id="PS51483">
    <property type="entry name" value="B5"/>
    <property type="match status" value="1"/>
</dbReference>
<dbReference type="PROSITE" id="PS51447">
    <property type="entry name" value="FDX_ACB"/>
    <property type="match status" value="1"/>
</dbReference>
<dbReference type="PROSITE" id="PS50886">
    <property type="entry name" value="TRBD"/>
    <property type="match status" value="1"/>
</dbReference>
<comment type="catalytic activity">
    <reaction evidence="1">
        <text>tRNA(Phe) + L-phenylalanine + ATP = L-phenylalanyl-tRNA(Phe) + AMP + diphosphate + H(+)</text>
        <dbReference type="Rhea" id="RHEA:19413"/>
        <dbReference type="Rhea" id="RHEA-COMP:9668"/>
        <dbReference type="Rhea" id="RHEA-COMP:9699"/>
        <dbReference type="ChEBI" id="CHEBI:15378"/>
        <dbReference type="ChEBI" id="CHEBI:30616"/>
        <dbReference type="ChEBI" id="CHEBI:33019"/>
        <dbReference type="ChEBI" id="CHEBI:58095"/>
        <dbReference type="ChEBI" id="CHEBI:78442"/>
        <dbReference type="ChEBI" id="CHEBI:78531"/>
        <dbReference type="ChEBI" id="CHEBI:456215"/>
        <dbReference type="EC" id="6.1.1.20"/>
    </reaction>
</comment>
<comment type="cofactor">
    <cofactor evidence="1">
        <name>Mg(2+)</name>
        <dbReference type="ChEBI" id="CHEBI:18420"/>
    </cofactor>
    <text evidence="1">Binds 2 magnesium ions per tetramer.</text>
</comment>
<comment type="subunit">
    <text evidence="1">Tetramer of two alpha and two beta subunits.</text>
</comment>
<comment type="subcellular location">
    <subcellularLocation>
        <location evidence="1">Cytoplasm</location>
    </subcellularLocation>
</comment>
<comment type="similarity">
    <text evidence="1">Belongs to the phenylalanyl-tRNA synthetase beta subunit family. Type 1 subfamily.</text>
</comment>
<name>SYFB_PROMP</name>
<proteinExistence type="inferred from homology"/>
<feature type="chain" id="PRO_0000126931" description="Phenylalanine--tRNA ligase beta subunit">
    <location>
        <begin position="1"/>
        <end position="821"/>
    </location>
</feature>
<feature type="domain" description="tRNA-binding" evidence="1">
    <location>
        <begin position="39"/>
        <end position="149"/>
    </location>
</feature>
<feature type="domain" description="B5" evidence="1">
    <location>
        <begin position="414"/>
        <end position="507"/>
    </location>
</feature>
<feature type="domain" description="FDX-ACB" evidence="1">
    <location>
        <begin position="727"/>
        <end position="820"/>
    </location>
</feature>
<feature type="binding site" evidence="1">
    <location>
        <position position="485"/>
    </location>
    <ligand>
        <name>Mg(2+)</name>
        <dbReference type="ChEBI" id="CHEBI:18420"/>
        <note>shared with alpha subunit</note>
    </ligand>
</feature>
<feature type="binding site" evidence="1">
    <location>
        <position position="491"/>
    </location>
    <ligand>
        <name>Mg(2+)</name>
        <dbReference type="ChEBI" id="CHEBI:18420"/>
        <note>shared with alpha subunit</note>
    </ligand>
</feature>
<feature type="binding site" evidence="1">
    <location>
        <position position="494"/>
    </location>
    <ligand>
        <name>Mg(2+)</name>
        <dbReference type="ChEBI" id="CHEBI:18420"/>
        <note>shared with alpha subunit</note>
    </ligand>
</feature>
<feature type="binding site" evidence="1">
    <location>
        <position position="495"/>
    </location>
    <ligand>
        <name>Mg(2+)</name>
        <dbReference type="ChEBI" id="CHEBI:18420"/>
        <note>shared with alpha subunit</note>
    </ligand>
</feature>
<gene>
    <name evidence="1" type="primary">pheT</name>
    <name type="ordered locus">PMM0871</name>
</gene>
<evidence type="ECO:0000255" key="1">
    <source>
        <dbReference type="HAMAP-Rule" id="MF_00283"/>
    </source>
</evidence>
<keyword id="KW-0030">Aminoacyl-tRNA synthetase</keyword>
<keyword id="KW-0067">ATP-binding</keyword>
<keyword id="KW-0963">Cytoplasm</keyword>
<keyword id="KW-0436">Ligase</keyword>
<keyword id="KW-0460">Magnesium</keyword>
<keyword id="KW-0479">Metal-binding</keyword>
<keyword id="KW-0547">Nucleotide-binding</keyword>
<keyword id="KW-0648">Protein biosynthesis</keyword>
<keyword id="KW-0694">RNA-binding</keyword>
<keyword id="KW-0820">tRNA-binding</keyword>
<reference key="1">
    <citation type="journal article" date="2003" name="Nature">
        <title>Genome divergence in two Prochlorococcus ecotypes reflects oceanic niche differentiation.</title>
        <authorList>
            <person name="Rocap G."/>
            <person name="Larimer F.W."/>
            <person name="Lamerdin J.E."/>
            <person name="Malfatti S."/>
            <person name="Chain P."/>
            <person name="Ahlgren N.A."/>
            <person name="Arellano A."/>
            <person name="Coleman M."/>
            <person name="Hauser L."/>
            <person name="Hess W.R."/>
            <person name="Johnson Z.I."/>
            <person name="Land M.L."/>
            <person name="Lindell D."/>
            <person name="Post A.F."/>
            <person name="Regala W."/>
            <person name="Shah M."/>
            <person name="Shaw S.L."/>
            <person name="Steglich C."/>
            <person name="Sullivan M.B."/>
            <person name="Ting C.S."/>
            <person name="Tolonen A."/>
            <person name="Webb E.A."/>
            <person name="Zinser E.R."/>
            <person name="Chisholm S.W."/>
        </authorList>
    </citation>
    <scope>NUCLEOTIDE SEQUENCE [LARGE SCALE GENOMIC DNA]</scope>
    <source>
        <strain>CCMP1986 / NIES-2087 / MED4</strain>
    </source>
</reference>
<protein>
    <recommendedName>
        <fullName evidence="1">Phenylalanine--tRNA ligase beta subunit</fullName>
        <ecNumber evidence="1">6.1.1.20</ecNumber>
    </recommendedName>
    <alternativeName>
        <fullName evidence="1">Phenylalanyl-tRNA synthetase beta subunit</fullName>
        <shortName evidence="1">PheRS</shortName>
    </alternativeName>
</protein>
<sequence length="821" mass="92758">MKVSQNWLKSLVEINTTAHDLSEKLSIGGFEVESLVDCSENVKGIVLGKVLSVVKHENSDKLSICIVDIGRSNPLQIVCGAKNVKQNIYVYVATVGTHLSAINLTIKKSEIRGVSSEGMICSLEELGIEDTSEGIAIIDEDIALNHNLGTSGAELLDLNDYIYDLAITANRPDGMSVVGIAREISALLETKLNFPGLKTRYKTNVYKNFNLCPEAISKNCLYSISNIESVNGKQLSPGWLKDRLDKSGIKSINLLVDITNYILLEQGQPLHAFDKDKLSNLIGRKVSYEDFSVRKANNNESLLCLNGENYKLNENITIIACDDKPVAIAGVIGGLETAVNEDTSSIYLEGAVFNPVIIRKSSKVIGIRTESSSRYEKGISYKNTLDSVTRAINILEEYFNITSPIINTSTELDLKKILIPLRRERIKKILGPIVIRNENYENNSKLEKRYLTDTEITEKLKLIGCTLNIKEYGWDVEIIPNRSQDLLREIDLIEEIARLIGYDMFDLNLPNPIKPGKLSSFQIALRKLKTGLIVNGFNEVLSYSLVPESKNNLIKISNPLLLETSCLRDNIWKEHINICNQNIKSGHEYCWIFEVGNIFHKKPDFSQEEILNGAIYGNNKFEQWLGSNKDNNMTYYEARGKLKEALSILNLNIEDKPTDTIDFLHPGRSSRLFTEGNEVGYFGEIHPNLISNKIALKKMYLFSLKINSILQASTRKNKWITVYKQFPTVPKMERDINFIFNKKYLVSEIISQIKKSGTKLLENVNLIDVYDDDSFGKEFISYTFRLSYRDSEKTLLDSDIGYLHDSVVEIIEKKFSTKLRD</sequence>
<accession>Q7V1J8</accession>
<organism>
    <name type="scientific">Prochlorococcus marinus subsp. pastoris (strain CCMP1986 / NIES-2087 / MED4)</name>
    <dbReference type="NCBI Taxonomy" id="59919"/>
    <lineage>
        <taxon>Bacteria</taxon>
        <taxon>Bacillati</taxon>
        <taxon>Cyanobacteriota</taxon>
        <taxon>Cyanophyceae</taxon>
        <taxon>Synechococcales</taxon>
        <taxon>Prochlorococcaceae</taxon>
        <taxon>Prochlorococcus</taxon>
    </lineage>
</organism>